<keyword id="KW-0009">Actin-binding</keyword>
<keyword id="KW-0966">Cell projection</keyword>
<keyword id="KW-0963">Cytoplasm</keyword>
<keyword id="KW-0333">Golgi apparatus</keyword>
<keyword id="KW-0880">Kelch repeat</keyword>
<keyword id="KW-0539">Nucleus</keyword>
<keyword id="KW-0653">Protein transport</keyword>
<keyword id="KW-1185">Reference proteome</keyword>
<keyword id="KW-0677">Repeat</keyword>
<keyword id="KW-0813">Transport</keyword>
<keyword id="KW-0833">Ubl conjugation pathway</keyword>
<proteinExistence type="evidence at transcript level"/>
<accession>Q08DK3</accession>
<dbReference type="EMBL" id="BC123702">
    <property type="protein sequence ID" value="AAI23703.1"/>
    <property type="molecule type" value="mRNA"/>
</dbReference>
<dbReference type="RefSeq" id="NP_001070303.1">
    <property type="nucleotide sequence ID" value="NM_001076835.1"/>
</dbReference>
<dbReference type="RefSeq" id="XP_005217118.1">
    <property type="nucleotide sequence ID" value="XM_005217061.3"/>
</dbReference>
<dbReference type="RefSeq" id="XP_005217119.1">
    <property type="nucleotide sequence ID" value="XM_005217062.5"/>
</dbReference>
<dbReference type="SMR" id="Q08DK3"/>
<dbReference type="FunCoup" id="Q08DK3">
    <property type="interactions" value="3933"/>
</dbReference>
<dbReference type="IntAct" id="Q08DK3">
    <property type="interactions" value="2"/>
</dbReference>
<dbReference type="STRING" id="9913.ENSBTAP00000071634"/>
<dbReference type="PaxDb" id="9913-ENSBTAP00000033909"/>
<dbReference type="Ensembl" id="ENSBTAT00000034007.5">
    <property type="protein sequence ID" value="ENSBTAP00000033909.3"/>
    <property type="gene ID" value="ENSBTAG00000024485.5"/>
</dbReference>
<dbReference type="GeneID" id="511387"/>
<dbReference type="KEGG" id="bta:511387"/>
<dbReference type="CTD" id="27252"/>
<dbReference type="VEuPathDB" id="HostDB:ENSBTAG00000024485"/>
<dbReference type="VGNC" id="VGNC:30649">
    <property type="gene designation" value="KLHL20"/>
</dbReference>
<dbReference type="eggNOG" id="KOG4441">
    <property type="taxonomic scope" value="Eukaryota"/>
</dbReference>
<dbReference type="GeneTree" id="ENSGT00940000155161"/>
<dbReference type="HOGENOM" id="CLU_004253_14_2_1"/>
<dbReference type="InParanoid" id="Q08DK3"/>
<dbReference type="OMA" id="CAVFNNL"/>
<dbReference type="OrthoDB" id="45365at2759"/>
<dbReference type="TreeFam" id="TF329218"/>
<dbReference type="Reactome" id="R-BTA-8951664">
    <property type="pathway name" value="Neddylation"/>
</dbReference>
<dbReference type="Reactome" id="R-BTA-983168">
    <property type="pathway name" value="Antigen processing: Ubiquitination &amp; Proteasome degradation"/>
</dbReference>
<dbReference type="UniPathway" id="UPA00143"/>
<dbReference type="Proteomes" id="UP000009136">
    <property type="component" value="Chromosome 16"/>
</dbReference>
<dbReference type="Bgee" id="ENSBTAG00000024485">
    <property type="expression patterns" value="Expressed in midbrain and 103 other cell types or tissues"/>
</dbReference>
<dbReference type="GO" id="GO:0030424">
    <property type="term" value="C:axon"/>
    <property type="evidence" value="ECO:0007669"/>
    <property type="project" value="UniProtKB-SubCell"/>
</dbReference>
<dbReference type="GO" id="GO:0031463">
    <property type="term" value="C:Cul3-RING ubiquitin ligase complex"/>
    <property type="evidence" value="ECO:0000250"/>
    <property type="project" value="UniProtKB"/>
</dbReference>
<dbReference type="GO" id="GO:0005737">
    <property type="term" value="C:cytoplasm"/>
    <property type="evidence" value="ECO:0000250"/>
    <property type="project" value="UniProtKB"/>
</dbReference>
<dbReference type="GO" id="GO:0005829">
    <property type="term" value="C:cytosol"/>
    <property type="evidence" value="ECO:0007669"/>
    <property type="project" value="GOC"/>
</dbReference>
<dbReference type="GO" id="GO:0030425">
    <property type="term" value="C:dendrite"/>
    <property type="evidence" value="ECO:0007669"/>
    <property type="project" value="UniProtKB-SubCell"/>
</dbReference>
<dbReference type="GO" id="GO:0048471">
    <property type="term" value="C:perinuclear region of cytoplasm"/>
    <property type="evidence" value="ECO:0007669"/>
    <property type="project" value="UniProtKB-SubCell"/>
</dbReference>
<dbReference type="GO" id="GO:0016605">
    <property type="term" value="C:PML body"/>
    <property type="evidence" value="ECO:0000250"/>
    <property type="project" value="UniProtKB"/>
</dbReference>
<dbReference type="GO" id="GO:0005802">
    <property type="term" value="C:trans-Golgi network"/>
    <property type="evidence" value="ECO:0000250"/>
    <property type="project" value="UniProtKB"/>
</dbReference>
<dbReference type="GO" id="GO:0003779">
    <property type="term" value="F:actin binding"/>
    <property type="evidence" value="ECO:0007669"/>
    <property type="project" value="UniProtKB-KW"/>
</dbReference>
<dbReference type="GO" id="GO:0019964">
    <property type="term" value="F:type II interferon binding"/>
    <property type="evidence" value="ECO:0000250"/>
    <property type="project" value="UniProtKB"/>
</dbReference>
<dbReference type="GO" id="GO:1990756">
    <property type="term" value="F:ubiquitin-like ligase-substrate adaptor activity"/>
    <property type="evidence" value="ECO:0000318"/>
    <property type="project" value="GO_Central"/>
</dbReference>
<dbReference type="GO" id="GO:0006895">
    <property type="term" value="P:Golgi to endosome transport"/>
    <property type="evidence" value="ECO:0000250"/>
    <property type="project" value="UniProtKB"/>
</dbReference>
<dbReference type="GO" id="GO:0043066">
    <property type="term" value="P:negative regulation of apoptotic process"/>
    <property type="evidence" value="ECO:0000250"/>
    <property type="project" value="UniProtKB"/>
</dbReference>
<dbReference type="GO" id="GO:0043161">
    <property type="term" value="P:proteasome-mediated ubiquitin-dependent protein catabolic process"/>
    <property type="evidence" value="ECO:0000250"/>
    <property type="project" value="UniProtKB"/>
</dbReference>
<dbReference type="GO" id="GO:1990390">
    <property type="term" value="P:protein K33-linked ubiquitination"/>
    <property type="evidence" value="ECO:0000250"/>
    <property type="project" value="UniProtKB"/>
</dbReference>
<dbReference type="GO" id="GO:0015031">
    <property type="term" value="P:protein transport"/>
    <property type="evidence" value="ECO:0007669"/>
    <property type="project" value="UniProtKB-KW"/>
</dbReference>
<dbReference type="GO" id="GO:0016567">
    <property type="term" value="P:protein ubiquitination"/>
    <property type="evidence" value="ECO:0000250"/>
    <property type="project" value="UniProtKB"/>
</dbReference>
<dbReference type="CDD" id="cd18459">
    <property type="entry name" value="BACK_KLHL20"/>
    <property type="match status" value="1"/>
</dbReference>
<dbReference type="CDD" id="cd18249">
    <property type="entry name" value="BTB_POZ_KLHL20_KLEIP"/>
    <property type="match status" value="1"/>
</dbReference>
<dbReference type="FunFam" id="1.25.40.420:FF:000001">
    <property type="entry name" value="Kelch-like family member 12"/>
    <property type="match status" value="1"/>
</dbReference>
<dbReference type="FunFam" id="2.120.10.80:FF:000006">
    <property type="entry name" value="Kelch-like family member 20"/>
    <property type="match status" value="1"/>
</dbReference>
<dbReference type="FunFam" id="3.30.710.10:FF:000001">
    <property type="entry name" value="Kelch-like family member 20"/>
    <property type="match status" value="1"/>
</dbReference>
<dbReference type="Gene3D" id="1.25.40.420">
    <property type="match status" value="1"/>
</dbReference>
<dbReference type="Gene3D" id="2.120.10.80">
    <property type="entry name" value="Kelch-type beta propeller"/>
    <property type="match status" value="1"/>
</dbReference>
<dbReference type="Gene3D" id="3.30.710.10">
    <property type="entry name" value="Potassium Channel Kv1.1, Chain A"/>
    <property type="match status" value="1"/>
</dbReference>
<dbReference type="InterPro" id="IPR011705">
    <property type="entry name" value="BACK"/>
</dbReference>
<dbReference type="InterPro" id="IPR017096">
    <property type="entry name" value="BTB-kelch_protein"/>
</dbReference>
<dbReference type="InterPro" id="IPR000210">
    <property type="entry name" value="BTB/POZ_dom"/>
</dbReference>
<dbReference type="InterPro" id="IPR015915">
    <property type="entry name" value="Kelch-typ_b-propeller"/>
</dbReference>
<dbReference type="InterPro" id="IPR006652">
    <property type="entry name" value="Kelch_1"/>
</dbReference>
<dbReference type="InterPro" id="IPR011333">
    <property type="entry name" value="SKP1/BTB/POZ_sf"/>
</dbReference>
<dbReference type="PANTHER" id="PTHR24412">
    <property type="entry name" value="KELCH PROTEIN"/>
    <property type="match status" value="1"/>
</dbReference>
<dbReference type="PANTHER" id="PTHR24412:SF451">
    <property type="entry name" value="KELCH-LIKE PROTEIN 20"/>
    <property type="match status" value="1"/>
</dbReference>
<dbReference type="Pfam" id="PF07707">
    <property type="entry name" value="BACK"/>
    <property type="match status" value="1"/>
</dbReference>
<dbReference type="Pfam" id="PF00651">
    <property type="entry name" value="BTB"/>
    <property type="match status" value="1"/>
</dbReference>
<dbReference type="Pfam" id="PF01344">
    <property type="entry name" value="Kelch_1"/>
    <property type="match status" value="2"/>
</dbReference>
<dbReference type="Pfam" id="PF24681">
    <property type="entry name" value="Kelch_KLHDC2_KLHL20_DRC7"/>
    <property type="match status" value="1"/>
</dbReference>
<dbReference type="PIRSF" id="PIRSF037037">
    <property type="entry name" value="Kelch-like_protein_gigaxonin"/>
    <property type="match status" value="1"/>
</dbReference>
<dbReference type="PRINTS" id="PR00501">
    <property type="entry name" value="KELCHREPEAT"/>
</dbReference>
<dbReference type="SMART" id="SM00875">
    <property type="entry name" value="BACK"/>
    <property type="match status" value="1"/>
</dbReference>
<dbReference type="SMART" id="SM00225">
    <property type="entry name" value="BTB"/>
    <property type="match status" value="1"/>
</dbReference>
<dbReference type="SMART" id="SM00612">
    <property type="entry name" value="Kelch"/>
    <property type="match status" value="6"/>
</dbReference>
<dbReference type="SUPFAM" id="SSF117281">
    <property type="entry name" value="Kelch motif"/>
    <property type="match status" value="1"/>
</dbReference>
<dbReference type="SUPFAM" id="SSF54695">
    <property type="entry name" value="POZ domain"/>
    <property type="match status" value="1"/>
</dbReference>
<dbReference type="PROSITE" id="PS50097">
    <property type="entry name" value="BTB"/>
    <property type="match status" value="1"/>
</dbReference>
<reference key="1">
    <citation type="submission" date="2006-09" db="EMBL/GenBank/DDBJ databases">
        <authorList>
            <consortium name="NIH - Mammalian Gene Collection (MGC) project"/>
        </authorList>
    </citation>
    <scope>NUCLEOTIDE SEQUENCE [LARGE SCALE MRNA]</scope>
    <source>
        <strain>Hereford</strain>
        <tissue>Hippocampus</tissue>
    </source>
</reference>
<protein>
    <recommendedName>
        <fullName>Kelch-like protein 20</fullName>
    </recommendedName>
</protein>
<name>KLH20_BOVIN</name>
<gene>
    <name type="primary">KLHL20</name>
</gene>
<comment type="function">
    <text evidence="2">Substrate-specific adapter of a BCR (BTB-CUL3-RBX1) E3 ubiquitin-protein ligase complex involved in interferon response and anterograde Golgi to endosome transport. The BCR(KLHL20) E3 ubiquitin ligase complex mediates the ubiquitination of DAPK1, leading to its degradation by the proteasome, thereby acting as a negative regulator of apoptosis. The BCR(KLHL20) E3 ubiquitin ligase complex also specifically mediates 'Lys-33'-linked ubiquitination. Involved in anterograde Golgi to endosome transport by mediating 'Lys-33'-linked ubiquitination of CORO7, promoting interaction between CORO7 and EPS15, thereby facilitating actin polymerization and post-Golgi trafficking. Also acts as a regulator of endothelial migration during angiogenesis by controlling the activation of Rho GTPases. The BCR(KLHL20) E3 ubiquitin ligase complex acts as a regulator of neurite outgrowth by mediating ubiquitination and degradation of PDZ-RhoGEF/ARHGEF11 (By similarity).</text>
</comment>
<comment type="pathway">
    <text>Protein modification; protein ubiquitination.</text>
</comment>
<comment type="subunit">
    <text evidence="2">Component of the BCR(KLHL20) E3 ubiquitin ligase complex, at least composed of CUL3, KLHL20 and RBX1. Interacts with PDZ-RhoGEF/ARHGEF11, DAPK1, PML and CORO7. Interacts with F-actin. Interacts with IFN-gamma (IFNG) (By similarity). Interacts (via kelch repeats) with IVNS1ABP (via kelch repeats); this interaction blocks the assembly of CUL3-KLHL20 complex (By similarity).</text>
</comment>
<comment type="subcellular location">
    <subcellularLocation>
        <location evidence="1">Cytoplasm</location>
        <location evidence="1">Perinuclear region</location>
    </subcellularLocation>
    <subcellularLocation>
        <location evidence="1">Nucleus</location>
    </subcellularLocation>
    <subcellularLocation>
        <location evidence="1">Golgi apparatus</location>
        <location evidence="1">trans-Golgi network</location>
    </subcellularLocation>
    <subcellularLocation>
        <location evidence="1">Cell projection</location>
        <location evidence="1">Axon</location>
    </subcellularLocation>
    <subcellularLocation>
        <location evidence="1">Cell projection</location>
        <location evidence="1">Dendrite</location>
    </subcellularLocation>
    <text evidence="1">Localizes in the perinuclear region in normal conditions. Following IFN-alpha or IFN-gamma treatment, it is relocalized and sequestrated to the PML nuclear bodies, preventing DAPK1 ubiquitination (By similarity).</text>
</comment>
<sequence>MEGKPMRRCTNIRPGETGMDVTSRCTLGDPNKLPEGVPQPARMPYISDKHPRQTLEVINLLRKHRELCDVVLVVGAKKIYAHRVILSACSPYFRAMFTGELAESRQTEVVIRDIDERAMELLIDFAYTSQITVEEGNVQTLLPAACLLQLAEIQEACCEFLKRQLDPSNCLGIRAFADTHSCRELLRIADKFTQHNFQEVMESEEFMLLPANQLIDIISSDELNVRSEEQVFNAVMAWVKYSIQERRPQLPQVLQHVRLPLLSPKFLVGTVGSDPLIKSDEECRDLVDEAKNYLLLPQERPLMQGPRTRPRKPIRCGEVLFAVGGWCSGDAISSVERYDPQTNEWRMVASMSKRRCGVGVSVLDDLLYAVGGHDGSSYLNSVERYDPKTNQWSSDVAPTSTCRTSVGVAVLGGFLYAVGGQDGVSCLNIVERYDPKENKWTRVASMSTRRLGVAVAVLGGFLYAVGGSDGTSPLNTVERYNPQENRWHTIAPMGTRRKHLGCAVYQDMIYAVGGRDDTTELSSAERYNPRTNQWSPVVAMTSRRSGVGLAVVNGQLMAVGGFDGTTYLKTIEVFDPDANTWRLYGGMNYRRLGGGVGVIKMTHCESHIW</sequence>
<feature type="chain" id="PRO_0000278666" description="Kelch-like protein 20">
    <location>
        <begin position="1"/>
        <end position="609"/>
    </location>
</feature>
<feature type="domain" description="BTB" evidence="3">
    <location>
        <begin position="68"/>
        <end position="135"/>
    </location>
</feature>
<feature type="domain" description="BACK">
    <location>
        <begin position="170"/>
        <end position="272"/>
    </location>
</feature>
<feature type="repeat" description="Kelch 1">
    <location>
        <begin position="319"/>
        <end position="365"/>
    </location>
</feature>
<feature type="repeat" description="Kelch 2">
    <location>
        <begin position="367"/>
        <end position="413"/>
    </location>
</feature>
<feature type="repeat" description="Kelch 3">
    <location>
        <begin position="414"/>
        <end position="460"/>
    </location>
</feature>
<feature type="repeat" description="Kelch 4">
    <location>
        <begin position="462"/>
        <end position="507"/>
    </location>
</feature>
<feature type="repeat" description="Kelch 5">
    <location>
        <begin position="509"/>
        <end position="554"/>
    </location>
</feature>
<feature type="repeat" description="Kelch 6">
    <location>
        <begin position="556"/>
        <end position="601"/>
    </location>
</feature>
<organism>
    <name type="scientific">Bos taurus</name>
    <name type="common">Bovine</name>
    <dbReference type="NCBI Taxonomy" id="9913"/>
    <lineage>
        <taxon>Eukaryota</taxon>
        <taxon>Metazoa</taxon>
        <taxon>Chordata</taxon>
        <taxon>Craniata</taxon>
        <taxon>Vertebrata</taxon>
        <taxon>Euteleostomi</taxon>
        <taxon>Mammalia</taxon>
        <taxon>Eutheria</taxon>
        <taxon>Laurasiatheria</taxon>
        <taxon>Artiodactyla</taxon>
        <taxon>Ruminantia</taxon>
        <taxon>Pecora</taxon>
        <taxon>Bovidae</taxon>
        <taxon>Bovinae</taxon>
        <taxon>Bos</taxon>
    </lineage>
</organism>
<evidence type="ECO:0000250" key="1"/>
<evidence type="ECO:0000250" key="2">
    <source>
        <dbReference type="UniProtKB" id="Q9Y2M5"/>
    </source>
</evidence>
<evidence type="ECO:0000255" key="3">
    <source>
        <dbReference type="PROSITE-ProRule" id="PRU00037"/>
    </source>
</evidence>